<keyword id="KW-0324">Glycolysis</keyword>
<keyword id="KW-0456">Lyase</keyword>
<keyword id="KW-0479">Metal-binding</keyword>
<keyword id="KW-1185">Reference proteome</keyword>
<keyword id="KW-0862">Zinc</keyword>
<sequence>MPIATPEVYAEMLGQAKQNSYAFPAINCTSSETVNAAIKGFADAGSDGIIQFSTGGAEFGSGLGVKDMVTGAVALAEFTHVIAAKYPVNVALHTDHCPKDKLDSYVRPLLAISAQRVSKGGNPLFQSHMWDGSAVPIDENLAIAQELLKAAAAAKIILEIEIGVVGGEEDGVANEINEKLYTSPEDFEKTIEALGAGEHGKYLLAATFGNVHGVYKPGNVKLRPDILAQGQQVAAAKLGLPADAKPFDFVFHGGSGSLKSEIEEALRYGVVKMNVDTDTQYAFTRPIAGHMFTNYDGVLKVDGEVGVKKVYDPRSYLKKAEASMSQRVVQACNDLHCAGKSLTH</sequence>
<accession>P9WQA2</accession>
<accession>L0T684</accession>
<accession>O06313</accession>
<accession>P67475</accession>
<organism>
    <name type="scientific">Mycobacterium tuberculosis (strain CDC 1551 / Oshkosh)</name>
    <dbReference type="NCBI Taxonomy" id="83331"/>
    <lineage>
        <taxon>Bacteria</taxon>
        <taxon>Bacillati</taxon>
        <taxon>Actinomycetota</taxon>
        <taxon>Actinomycetes</taxon>
        <taxon>Mycobacteriales</taxon>
        <taxon>Mycobacteriaceae</taxon>
        <taxon>Mycobacterium</taxon>
        <taxon>Mycobacterium tuberculosis complex</taxon>
    </lineage>
</organism>
<comment type="function">
    <text evidence="1">Catalyzes the aldol condensation of dihydroxyacetone phosphate (DHAP or glycerone-phosphate) with glyceraldehyde 3-phosphate (G3P) to form fructose 1,6-bisphosphate (FBP) in gluconeogenesis and the reverse reaction in glycolysis.</text>
</comment>
<comment type="catalytic activity">
    <reaction>
        <text>beta-D-fructose 1,6-bisphosphate = D-glyceraldehyde 3-phosphate + dihydroxyacetone phosphate</text>
        <dbReference type="Rhea" id="RHEA:14729"/>
        <dbReference type="ChEBI" id="CHEBI:32966"/>
        <dbReference type="ChEBI" id="CHEBI:57642"/>
        <dbReference type="ChEBI" id="CHEBI:59776"/>
        <dbReference type="EC" id="4.1.2.13"/>
    </reaction>
</comment>
<comment type="cofactor">
    <cofactor evidence="1">
        <name>Zn(2+)</name>
        <dbReference type="ChEBI" id="CHEBI:29105"/>
    </cofactor>
    <text evidence="1">Binds 2 Zn(2+) ions per subunit. One is catalytic and the other provides a structural contribution.</text>
</comment>
<comment type="pathway">
    <text>Carbohydrate degradation; glycolysis; D-glyceraldehyde 3-phosphate and glycerone phosphate from D-glucose: step 4/4.</text>
</comment>
<comment type="similarity">
    <text evidence="2">Belongs to the class II fructose-bisphosphate aldolase family.</text>
</comment>
<evidence type="ECO:0000250" key="1"/>
<evidence type="ECO:0000305" key="2"/>
<proteinExistence type="inferred from homology"/>
<dbReference type="EC" id="4.1.2.13"/>
<dbReference type="EMBL" id="AE000516">
    <property type="protein sequence ID" value="AAK44600.1"/>
    <property type="molecule type" value="Genomic_DNA"/>
</dbReference>
<dbReference type="PIR" id="D70576">
    <property type="entry name" value="D70576"/>
</dbReference>
<dbReference type="SMR" id="P9WQA2"/>
<dbReference type="KEGG" id="mtc:MT0379"/>
<dbReference type="PATRIC" id="fig|83331.31.peg.402"/>
<dbReference type="HOGENOM" id="CLU_036923_1_0_11"/>
<dbReference type="UniPathway" id="UPA00109">
    <property type="reaction ID" value="UER00183"/>
</dbReference>
<dbReference type="Proteomes" id="UP000001020">
    <property type="component" value="Chromosome"/>
</dbReference>
<dbReference type="GO" id="GO:0005829">
    <property type="term" value="C:cytosol"/>
    <property type="evidence" value="ECO:0007669"/>
    <property type="project" value="TreeGrafter"/>
</dbReference>
<dbReference type="GO" id="GO:0004332">
    <property type="term" value="F:fructose-bisphosphate aldolase activity"/>
    <property type="evidence" value="ECO:0007669"/>
    <property type="project" value="UniProtKB-EC"/>
</dbReference>
<dbReference type="GO" id="GO:0008270">
    <property type="term" value="F:zinc ion binding"/>
    <property type="evidence" value="ECO:0007669"/>
    <property type="project" value="InterPro"/>
</dbReference>
<dbReference type="GO" id="GO:0006096">
    <property type="term" value="P:glycolytic process"/>
    <property type="evidence" value="ECO:0007669"/>
    <property type="project" value="UniProtKB-UniPathway"/>
</dbReference>
<dbReference type="FunFam" id="3.20.20.70:FF:000112">
    <property type="entry name" value="Fructose-bisphosphate aldolase Fba"/>
    <property type="match status" value="1"/>
</dbReference>
<dbReference type="Gene3D" id="3.20.20.70">
    <property type="entry name" value="Aldolase class I"/>
    <property type="match status" value="1"/>
</dbReference>
<dbReference type="InterPro" id="IPR013785">
    <property type="entry name" value="Aldolase_TIM"/>
</dbReference>
<dbReference type="InterPro" id="IPR000771">
    <property type="entry name" value="FBA_II"/>
</dbReference>
<dbReference type="InterPro" id="IPR006411">
    <property type="entry name" value="Fruct_bisP_bact"/>
</dbReference>
<dbReference type="NCBIfam" id="TIGR00167">
    <property type="entry name" value="cbbA"/>
    <property type="match status" value="1"/>
</dbReference>
<dbReference type="NCBIfam" id="TIGR01520">
    <property type="entry name" value="FruBisAldo_II_A"/>
    <property type="match status" value="1"/>
</dbReference>
<dbReference type="NCBIfam" id="NF006628">
    <property type="entry name" value="PRK09197.1"/>
    <property type="match status" value="1"/>
</dbReference>
<dbReference type="PANTHER" id="PTHR30559:SF0">
    <property type="entry name" value="FRUCTOSE-BISPHOSPHATE ALDOLASE"/>
    <property type="match status" value="1"/>
</dbReference>
<dbReference type="PANTHER" id="PTHR30559">
    <property type="entry name" value="FRUCTOSE-BISPHOSPHATE ALDOLASE CLASS 2"/>
    <property type="match status" value="1"/>
</dbReference>
<dbReference type="Pfam" id="PF01116">
    <property type="entry name" value="F_bP_aldolase"/>
    <property type="match status" value="1"/>
</dbReference>
<dbReference type="PIRSF" id="PIRSF001359">
    <property type="entry name" value="F_bP_aldolase_II"/>
    <property type="match status" value="1"/>
</dbReference>
<dbReference type="SUPFAM" id="SSF51569">
    <property type="entry name" value="Aldolase"/>
    <property type="match status" value="1"/>
</dbReference>
<dbReference type="PROSITE" id="PS00602">
    <property type="entry name" value="ALDOLASE_CLASS_II_1"/>
    <property type="match status" value="1"/>
</dbReference>
<dbReference type="PROSITE" id="PS00806">
    <property type="entry name" value="ALDOLASE_CLASS_II_2"/>
    <property type="match status" value="1"/>
</dbReference>
<protein>
    <recommendedName>
        <fullName>Fructose-bisphosphate aldolase</fullName>
        <shortName>FBP aldolase</shortName>
        <shortName>FBPA</shortName>
        <ecNumber>4.1.2.13</ecNumber>
    </recommendedName>
    <alternativeName>
        <fullName>Fructose-1,6-bisphosphate aldolase</fullName>
    </alternativeName>
</protein>
<gene>
    <name type="primary">fba</name>
    <name type="ordered locus">MT0379</name>
</gene>
<reference key="1">
    <citation type="journal article" date="2002" name="J. Bacteriol.">
        <title>Whole-genome comparison of Mycobacterium tuberculosis clinical and laboratory strains.</title>
        <authorList>
            <person name="Fleischmann R.D."/>
            <person name="Alland D."/>
            <person name="Eisen J.A."/>
            <person name="Carpenter L."/>
            <person name="White O."/>
            <person name="Peterson J.D."/>
            <person name="DeBoy R.T."/>
            <person name="Dodson R.J."/>
            <person name="Gwinn M.L."/>
            <person name="Haft D.H."/>
            <person name="Hickey E.K."/>
            <person name="Kolonay J.F."/>
            <person name="Nelson W.C."/>
            <person name="Umayam L.A."/>
            <person name="Ermolaeva M.D."/>
            <person name="Salzberg S.L."/>
            <person name="Delcher A."/>
            <person name="Utterback T.R."/>
            <person name="Weidman J.F."/>
            <person name="Khouri H.M."/>
            <person name="Gill J."/>
            <person name="Mikula A."/>
            <person name="Bishai W."/>
            <person name="Jacobs W.R. Jr."/>
            <person name="Venter J.C."/>
            <person name="Fraser C.M."/>
        </authorList>
    </citation>
    <scope>NUCLEOTIDE SEQUENCE [LARGE SCALE GENOMIC DNA]</scope>
    <source>
        <strain>CDC 1551 / Oshkosh</strain>
    </source>
</reference>
<name>ALF_MYCTO</name>
<feature type="chain" id="PRO_0000426811" description="Fructose-bisphosphate aldolase">
    <location>
        <begin position="1"/>
        <end position="344"/>
    </location>
</feature>
<feature type="active site" description="Proton donor" evidence="1">
    <location>
        <position position="95"/>
    </location>
</feature>
<feature type="binding site" evidence="1">
    <location>
        <position position="53"/>
    </location>
    <ligand>
        <name>D-glyceraldehyde 3-phosphate</name>
        <dbReference type="ChEBI" id="CHEBI:59776"/>
    </ligand>
</feature>
<feature type="binding site" evidence="1">
    <location>
        <position position="96"/>
    </location>
    <ligand>
        <name>Zn(2+)</name>
        <dbReference type="ChEBI" id="CHEBI:29105"/>
        <label>1</label>
        <note>catalytic</note>
    </ligand>
</feature>
<feature type="binding site" evidence="1">
    <location>
        <position position="131"/>
    </location>
    <ligand>
        <name>Zn(2+)</name>
        <dbReference type="ChEBI" id="CHEBI:29105"/>
        <label>2</label>
    </ligand>
</feature>
<feature type="binding site" evidence="1">
    <location>
        <position position="161"/>
    </location>
    <ligand>
        <name>Zn(2+)</name>
        <dbReference type="ChEBI" id="CHEBI:29105"/>
        <label>2</label>
    </ligand>
</feature>
<feature type="binding site" evidence="1">
    <location>
        <position position="212"/>
    </location>
    <ligand>
        <name>Zn(2+)</name>
        <dbReference type="ChEBI" id="CHEBI:29105"/>
        <label>1</label>
        <note>catalytic</note>
    </ligand>
</feature>
<feature type="binding site" evidence="1">
    <location>
        <position position="213"/>
    </location>
    <ligand>
        <name>dihydroxyacetone phosphate</name>
        <dbReference type="ChEBI" id="CHEBI:57642"/>
    </ligand>
</feature>
<feature type="binding site" evidence="1">
    <location>
        <position position="252"/>
    </location>
    <ligand>
        <name>Zn(2+)</name>
        <dbReference type="ChEBI" id="CHEBI:29105"/>
        <label>1</label>
        <note>catalytic</note>
    </ligand>
</feature>
<feature type="binding site" evidence="1">
    <location>
        <begin position="253"/>
        <end position="255"/>
    </location>
    <ligand>
        <name>dihydroxyacetone phosphate</name>
        <dbReference type="ChEBI" id="CHEBI:57642"/>
    </ligand>
</feature>
<feature type="binding site" evidence="1">
    <location>
        <begin position="274"/>
        <end position="277"/>
    </location>
    <ligand>
        <name>dihydroxyacetone phosphate</name>
        <dbReference type="ChEBI" id="CHEBI:57642"/>
    </ligand>
</feature>